<reference key="1">
    <citation type="submission" date="2007-11" db="EMBL/GenBank/DDBJ databases">
        <authorList>
            <consortium name="The Salmonella enterica serovar Arizonae Genome Sequencing Project"/>
            <person name="McClelland M."/>
            <person name="Sanderson E.K."/>
            <person name="Porwollik S."/>
            <person name="Spieth J."/>
            <person name="Clifton W.S."/>
            <person name="Fulton R."/>
            <person name="Chunyan W."/>
            <person name="Wollam A."/>
            <person name="Shah N."/>
            <person name="Pepin K."/>
            <person name="Bhonagiri V."/>
            <person name="Nash W."/>
            <person name="Johnson M."/>
            <person name="Thiruvilangam P."/>
            <person name="Wilson R."/>
        </authorList>
    </citation>
    <scope>NUCLEOTIDE SEQUENCE [LARGE SCALE GENOMIC DNA]</scope>
    <source>
        <strain>ATCC BAA-731 / CDC346-86 / RSK2980</strain>
    </source>
</reference>
<organism>
    <name type="scientific">Salmonella arizonae (strain ATCC BAA-731 / CDC346-86 / RSK2980)</name>
    <dbReference type="NCBI Taxonomy" id="41514"/>
    <lineage>
        <taxon>Bacteria</taxon>
        <taxon>Pseudomonadati</taxon>
        <taxon>Pseudomonadota</taxon>
        <taxon>Gammaproteobacteria</taxon>
        <taxon>Enterobacterales</taxon>
        <taxon>Enterobacteriaceae</taxon>
        <taxon>Salmonella</taxon>
    </lineage>
</organism>
<protein>
    <recommendedName>
        <fullName evidence="1">Porphobilinogen deaminase</fullName>
        <shortName evidence="1">PBG</shortName>
        <ecNumber evidence="1">2.5.1.61</ecNumber>
    </recommendedName>
    <alternativeName>
        <fullName evidence="1">Hydroxymethylbilane synthase</fullName>
        <shortName evidence="1">HMBS</shortName>
    </alternativeName>
    <alternativeName>
        <fullName evidence="1">Pre-uroporphyrinogen synthase</fullName>
    </alternativeName>
</protein>
<comment type="function">
    <text evidence="1">Tetrapolymerization of the monopyrrole PBG into the hydroxymethylbilane pre-uroporphyrinogen in several discrete steps.</text>
</comment>
<comment type="catalytic activity">
    <reaction evidence="1">
        <text>4 porphobilinogen + H2O = hydroxymethylbilane + 4 NH4(+)</text>
        <dbReference type="Rhea" id="RHEA:13185"/>
        <dbReference type="ChEBI" id="CHEBI:15377"/>
        <dbReference type="ChEBI" id="CHEBI:28938"/>
        <dbReference type="ChEBI" id="CHEBI:57845"/>
        <dbReference type="ChEBI" id="CHEBI:58126"/>
        <dbReference type="EC" id="2.5.1.61"/>
    </reaction>
</comment>
<comment type="cofactor">
    <cofactor evidence="1">
        <name>dipyrromethane</name>
        <dbReference type="ChEBI" id="CHEBI:60342"/>
    </cofactor>
    <text evidence="1">Binds 1 dipyrromethane group covalently.</text>
</comment>
<comment type="pathway">
    <text evidence="1">Porphyrin-containing compound metabolism; protoporphyrin-IX biosynthesis; coproporphyrinogen-III from 5-aminolevulinate: step 2/4.</text>
</comment>
<comment type="subunit">
    <text evidence="1">Monomer.</text>
</comment>
<comment type="miscellaneous">
    <text evidence="1">The porphobilinogen subunits are added to the dipyrromethane group.</text>
</comment>
<comment type="similarity">
    <text evidence="1">Belongs to the HMBS family.</text>
</comment>
<accession>A9MJ10</accession>
<proteinExistence type="inferred from homology"/>
<dbReference type="EC" id="2.5.1.61" evidence="1"/>
<dbReference type="EMBL" id="CP000880">
    <property type="protein sequence ID" value="ABX23519.1"/>
    <property type="molecule type" value="Genomic_DNA"/>
</dbReference>
<dbReference type="SMR" id="A9MJ10"/>
<dbReference type="STRING" id="41514.SARI_03714"/>
<dbReference type="KEGG" id="ses:SARI_03714"/>
<dbReference type="HOGENOM" id="CLU_019704_0_2_6"/>
<dbReference type="UniPathway" id="UPA00251">
    <property type="reaction ID" value="UER00319"/>
</dbReference>
<dbReference type="Proteomes" id="UP000002084">
    <property type="component" value="Chromosome"/>
</dbReference>
<dbReference type="GO" id="GO:0005737">
    <property type="term" value="C:cytoplasm"/>
    <property type="evidence" value="ECO:0007669"/>
    <property type="project" value="TreeGrafter"/>
</dbReference>
<dbReference type="GO" id="GO:0004418">
    <property type="term" value="F:hydroxymethylbilane synthase activity"/>
    <property type="evidence" value="ECO:0007669"/>
    <property type="project" value="UniProtKB-UniRule"/>
</dbReference>
<dbReference type="GO" id="GO:0006782">
    <property type="term" value="P:protoporphyrinogen IX biosynthetic process"/>
    <property type="evidence" value="ECO:0007669"/>
    <property type="project" value="UniProtKB-UniRule"/>
</dbReference>
<dbReference type="CDD" id="cd13646">
    <property type="entry name" value="PBP2_EcHMBS_like"/>
    <property type="match status" value="1"/>
</dbReference>
<dbReference type="FunFam" id="3.30.160.40:FF:000002">
    <property type="entry name" value="Porphobilinogen deaminase"/>
    <property type="match status" value="1"/>
</dbReference>
<dbReference type="FunFam" id="3.40.190.10:FF:000004">
    <property type="entry name" value="Porphobilinogen deaminase"/>
    <property type="match status" value="1"/>
</dbReference>
<dbReference type="FunFam" id="3.40.190.10:FF:000005">
    <property type="entry name" value="Porphobilinogen deaminase"/>
    <property type="match status" value="1"/>
</dbReference>
<dbReference type="Gene3D" id="3.40.190.10">
    <property type="entry name" value="Periplasmic binding protein-like II"/>
    <property type="match status" value="2"/>
</dbReference>
<dbReference type="Gene3D" id="3.30.160.40">
    <property type="entry name" value="Porphobilinogen deaminase, C-terminal domain"/>
    <property type="match status" value="1"/>
</dbReference>
<dbReference type="HAMAP" id="MF_00260">
    <property type="entry name" value="Porphobil_deam"/>
    <property type="match status" value="1"/>
</dbReference>
<dbReference type="InterPro" id="IPR000860">
    <property type="entry name" value="HemC"/>
</dbReference>
<dbReference type="InterPro" id="IPR022419">
    <property type="entry name" value="Porphobilin_deaminase_cofac_BS"/>
</dbReference>
<dbReference type="InterPro" id="IPR022417">
    <property type="entry name" value="Porphobilin_deaminase_N"/>
</dbReference>
<dbReference type="InterPro" id="IPR022418">
    <property type="entry name" value="Porphobilinogen_deaminase_C"/>
</dbReference>
<dbReference type="InterPro" id="IPR036803">
    <property type="entry name" value="Porphobilinogen_deaminase_C_sf"/>
</dbReference>
<dbReference type="NCBIfam" id="TIGR00212">
    <property type="entry name" value="hemC"/>
    <property type="match status" value="1"/>
</dbReference>
<dbReference type="PANTHER" id="PTHR11557">
    <property type="entry name" value="PORPHOBILINOGEN DEAMINASE"/>
    <property type="match status" value="1"/>
</dbReference>
<dbReference type="PANTHER" id="PTHR11557:SF0">
    <property type="entry name" value="PORPHOBILINOGEN DEAMINASE"/>
    <property type="match status" value="1"/>
</dbReference>
<dbReference type="Pfam" id="PF01379">
    <property type="entry name" value="Porphobil_deam"/>
    <property type="match status" value="1"/>
</dbReference>
<dbReference type="Pfam" id="PF03900">
    <property type="entry name" value="Porphobil_deamC"/>
    <property type="match status" value="1"/>
</dbReference>
<dbReference type="PIRSF" id="PIRSF001438">
    <property type="entry name" value="4pyrrol_synth_OHMeBilane_synth"/>
    <property type="match status" value="1"/>
</dbReference>
<dbReference type="PRINTS" id="PR00151">
    <property type="entry name" value="PORPHBDMNASE"/>
</dbReference>
<dbReference type="SUPFAM" id="SSF53850">
    <property type="entry name" value="Periplasmic binding protein-like II"/>
    <property type="match status" value="1"/>
</dbReference>
<dbReference type="SUPFAM" id="SSF54782">
    <property type="entry name" value="Porphobilinogen deaminase (hydroxymethylbilane synthase), C-terminal domain"/>
    <property type="match status" value="1"/>
</dbReference>
<dbReference type="PROSITE" id="PS00533">
    <property type="entry name" value="PORPHOBILINOGEN_DEAM"/>
    <property type="match status" value="1"/>
</dbReference>
<name>HEM3_SALAR</name>
<gene>
    <name evidence="1" type="primary">hemC</name>
    <name type="ordered locus">SARI_03714</name>
</gene>
<sequence>MLDNVLKIATRQSPLALWQAHYVKDALMATHPGLTVELVPMVTRGDVILDTPLAKVGGKGLFVKELEIALLEKRADIAVHSMKDVPVAFPDGLGLVTICEREDPRDAFVSNQYHSLDDLPAGSIVGTSSLRRQCQLAERRPDLIIRSLRGNVGTRLGKLDNGDYDAIILAVAGLKRLGLASRIRTALPPEVSLPAVGQGAIGIECRLDDARTHALLAPLNHPQTALRVTAERAMNTRLEGGCQVPIGSYAEIFNGEIWLRALVGAPDGSVMVRGERRGSPEQAEQMGISLAEELLENGARAILTAVYNGEAPA</sequence>
<keyword id="KW-0627">Porphyrin biosynthesis</keyword>
<keyword id="KW-1185">Reference proteome</keyword>
<keyword id="KW-0808">Transferase</keyword>
<feature type="chain" id="PRO_1000078620" description="Porphobilinogen deaminase">
    <location>
        <begin position="1"/>
        <end position="313"/>
    </location>
</feature>
<feature type="modified residue" description="S-(dipyrrolylmethanemethyl)cysteine" evidence="1">
    <location>
        <position position="242"/>
    </location>
</feature>
<evidence type="ECO:0000255" key="1">
    <source>
        <dbReference type="HAMAP-Rule" id="MF_00260"/>
    </source>
</evidence>